<name>MNMA_STAAR</name>
<proteinExistence type="inferred from homology"/>
<reference key="1">
    <citation type="journal article" date="2004" name="Proc. Natl. Acad. Sci. U.S.A.">
        <title>Complete genomes of two clinical Staphylococcus aureus strains: evidence for the rapid evolution of virulence and drug resistance.</title>
        <authorList>
            <person name="Holden M.T.G."/>
            <person name="Feil E.J."/>
            <person name="Lindsay J.A."/>
            <person name="Peacock S.J."/>
            <person name="Day N.P.J."/>
            <person name="Enright M.C."/>
            <person name="Foster T.J."/>
            <person name="Moore C.E."/>
            <person name="Hurst L."/>
            <person name="Atkin R."/>
            <person name="Barron A."/>
            <person name="Bason N."/>
            <person name="Bentley S.D."/>
            <person name="Chillingworth C."/>
            <person name="Chillingworth T."/>
            <person name="Churcher C."/>
            <person name="Clark L."/>
            <person name="Corton C."/>
            <person name="Cronin A."/>
            <person name="Doggett J."/>
            <person name="Dowd L."/>
            <person name="Feltwell T."/>
            <person name="Hance Z."/>
            <person name="Harris B."/>
            <person name="Hauser H."/>
            <person name="Holroyd S."/>
            <person name="Jagels K."/>
            <person name="James K.D."/>
            <person name="Lennard N."/>
            <person name="Line A."/>
            <person name="Mayes R."/>
            <person name="Moule S."/>
            <person name="Mungall K."/>
            <person name="Ormond D."/>
            <person name="Quail M.A."/>
            <person name="Rabbinowitsch E."/>
            <person name="Rutherford K.M."/>
            <person name="Sanders M."/>
            <person name="Sharp S."/>
            <person name="Simmonds M."/>
            <person name="Stevens K."/>
            <person name="Whitehead S."/>
            <person name="Barrell B.G."/>
            <person name="Spratt B.G."/>
            <person name="Parkhill J."/>
        </authorList>
    </citation>
    <scope>NUCLEOTIDE SEQUENCE [LARGE SCALE GENOMIC DNA]</scope>
    <source>
        <strain>MRSA252</strain>
    </source>
</reference>
<gene>
    <name evidence="1" type="primary">mnmA</name>
    <name type="synonym">trmU</name>
    <name type="ordered locus">SAR1701</name>
</gene>
<accession>Q6GG82</accession>
<feature type="chain" id="PRO_0000121676" description="tRNA-specific 2-thiouridylase MnmA">
    <location>
        <begin position="1"/>
        <end position="372"/>
    </location>
</feature>
<feature type="region of interest" description="Interaction with target base in tRNA" evidence="1">
    <location>
        <begin position="97"/>
        <end position="99"/>
    </location>
</feature>
<feature type="region of interest" description="Interaction with tRNA" evidence="1">
    <location>
        <begin position="149"/>
        <end position="151"/>
    </location>
</feature>
<feature type="region of interest" description="Interaction with tRNA" evidence="1">
    <location>
        <begin position="309"/>
        <end position="310"/>
    </location>
</feature>
<feature type="active site" description="Nucleophile" evidence="1">
    <location>
        <position position="102"/>
    </location>
</feature>
<feature type="active site" description="Cysteine persulfide intermediate" evidence="1">
    <location>
        <position position="199"/>
    </location>
</feature>
<feature type="binding site" evidence="1">
    <location>
        <begin position="11"/>
        <end position="18"/>
    </location>
    <ligand>
        <name>ATP</name>
        <dbReference type="ChEBI" id="CHEBI:30616"/>
    </ligand>
</feature>
<feature type="binding site" evidence="1">
    <location>
        <position position="37"/>
    </location>
    <ligand>
        <name>ATP</name>
        <dbReference type="ChEBI" id="CHEBI:30616"/>
    </ligand>
</feature>
<feature type="binding site" evidence="1">
    <location>
        <position position="126"/>
    </location>
    <ligand>
        <name>ATP</name>
        <dbReference type="ChEBI" id="CHEBI:30616"/>
    </ligand>
</feature>
<feature type="site" description="Interaction with tRNA" evidence="1">
    <location>
        <position position="127"/>
    </location>
</feature>
<feature type="site" description="Interaction with tRNA" evidence="1">
    <location>
        <position position="342"/>
    </location>
</feature>
<feature type="disulfide bond" description="Alternate" evidence="1">
    <location>
        <begin position="102"/>
        <end position="199"/>
    </location>
</feature>
<comment type="function">
    <text evidence="1">Catalyzes the 2-thiolation of uridine at the wobble position (U34) of tRNA, leading to the formation of s(2)U34.</text>
</comment>
<comment type="catalytic activity">
    <reaction evidence="1">
        <text>S-sulfanyl-L-cysteinyl-[protein] + uridine(34) in tRNA + AH2 + ATP = 2-thiouridine(34) in tRNA + L-cysteinyl-[protein] + A + AMP + diphosphate + H(+)</text>
        <dbReference type="Rhea" id="RHEA:47032"/>
        <dbReference type="Rhea" id="RHEA-COMP:10131"/>
        <dbReference type="Rhea" id="RHEA-COMP:11726"/>
        <dbReference type="Rhea" id="RHEA-COMP:11727"/>
        <dbReference type="Rhea" id="RHEA-COMP:11728"/>
        <dbReference type="ChEBI" id="CHEBI:13193"/>
        <dbReference type="ChEBI" id="CHEBI:15378"/>
        <dbReference type="ChEBI" id="CHEBI:17499"/>
        <dbReference type="ChEBI" id="CHEBI:29950"/>
        <dbReference type="ChEBI" id="CHEBI:30616"/>
        <dbReference type="ChEBI" id="CHEBI:33019"/>
        <dbReference type="ChEBI" id="CHEBI:61963"/>
        <dbReference type="ChEBI" id="CHEBI:65315"/>
        <dbReference type="ChEBI" id="CHEBI:87170"/>
        <dbReference type="ChEBI" id="CHEBI:456215"/>
        <dbReference type="EC" id="2.8.1.13"/>
    </reaction>
</comment>
<comment type="subcellular location">
    <subcellularLocation>
        <location evidence="1">Cytoplasm</location>
    </subcellularLocation>
</comment>
<comment type="similarity">
    <text evidence="1">Belongs to the MnmA/TRMU family.</text>
</comment>
<keyword id="KW-0067">ATP-binding</keyword>
<keyword id="KW-0963">Cytoplasm</keyword>
<keyword id="KW-1015">Disulfide bond</keyword>
<keyword id="KW-0547">Nucleotide-binding</keyword>
<keyword id="KW-0694">RNA-binding</keyword>
<keyword id="KW-0808">Transferase</keyword>
<keyword id="KW-0819">tRNA processing</keyword>
<keyword id="KW-0820">tRNA-binding</keyword>
<sequence length="372" mass="42150">MSNKDIRVVVGMSGGVDSSVTAHVLKEQGYDVIGIFMKNWDDTDENGVCTATEDYNDVIEVCNQIGIPYYAVNFEKEYWDKVFTYFLDEYKKGRTPNPDVMCNKEIKFKAFLDHAMNLGADYVATGHYARIHRHEDGHVEMLRGVDNNKDQTYFLNQLSQQQLSKVMFPIGDIEKSEVRRIAEEQGLVTAKKKDSTGICFIGEKNFKTFLSQYLPAQPGDMITLDGKKMGKHSGLMYYTIGQRHGLGIGGDGDPWFVVGKNLKDNVLYVEQGFHHDALYSDYLIASDYSFVNPEDNDLDQGFECTAKFRYRQKDTKVFVKRENDHALRVTFAEPVRAITPGQAVVFYQGDVCLGGATIDDVFKNEGQLNYVV</sequence>
<protein>
    <recommendedName>
        <fullName evidence="1">tRNA-specific 2-thiouridylase MnmA</fullName>
        <ecNumber evidence="1">2.8.1.13</ecNumber>
    </recommendedName>
</protein>
<dbReference type="EC" id="2.8.1.13" evidence="1"/>
<dbReference type="EMBL" id="BX571856">
    <property type="protein sequence ID" value="CAG40692.1"/>
    <property type="molecule type" value="Genomic_DNA"/>
</dbReference>
<dbReference type="RefSeq" id="WP_000066097.1">
    <property type="nucleotide sequence ID" value="NC_002952.2"/>
</dbReference>
<dbReference type="SMR" id="Q6GG82"/>
<dbReference type="KEGG" id="sar:SAR1701"/>
<dbReference type="HOGENOM" id="CLU_035188_1_0_9"/>
<dbReference type="Proteomes" id="UP000000596">
    <property type="component" value="Chromosome"/>
</dbReference>
<dbReference type="GO" id="GO:0005737">
    <property type="term" value="C:cytoplasm"/>
    <property type="evidence" value="ECO:0007669"/>
    <property type="project" value="UniProtKB-SubCell"/>
</dbReference>
<dbReference type="GO" id="GO:0005524">
    <property type="term" value="F:ATP binding"/>
    <property type="evidence" value="ECO:0007669"/>
    <property type="project" value="UniProtKB-KW"/>
</dbReference>
<dbReference type="GO" id="GO:0000049">
    <property type="term" value="F:tRNA binding"/>
    <property type="evidence" value="ECO:0007669"/>
    <property type="project" value="UniProtKB-KW"/>
</dbReference>
<dbReference type="GO" id="GO:0103016">
    <property type="term" value="F:tRNA-uridine 2-sulfurtransferase activity"/>
    <property type="evidence" value="ECO:0007669"/>
    <property type="project" value="UniProtKB-EC"/>
</dbReference>
<dbReference type="GO" id="GO:0002143">
    <property type="term" value="P:tRNA wobble position uridine thiolation"/>
    <property type="evidence" value="ECO:0007669"/>
    <property type="project" value="TreeGrafter"/>
</dbReference>
<dbReference type="CDD" id="cd01998">
    <property type="entry name" value="MnmA_TRMU-like"/>
    <property type="match status" value="1"/>
</dbReference>
<dbReference type="FunFam" id="2.30.30.280:FF:000001">
    <property type="entry name" value="tRNA-specific 2-thiouridylase MnmA"/>
    <property type="match status" value="1"/>
</dbReference>
<dbReference type="FunFam" id="2.40.30.10:FF:000023">
    <property type="entry name" value="tRNA-specific 2-thiouridylase MnmA"/>
    <property type="match status" value="1"/>
</dbReference>
<dbReference type="FunFam" id="3.40.50.620:FF:000004">
    <property type="entry name" value="tRNA-specific 2-thiouridylase MnmA"/>
    <property type="match status" value="1"/>
</dbReference>
<dbReference type="Gene3D" id="2.30.30.280">
    <property type="entry name" value="Adenine nucleotide alpha hydrolases-like domains"/>
    <property type="match status" value="1"/>
</dbReference>
<dbReference type="Gene3D" id="3.40.50.620">
    <property type="entry name" value="HUPs"/>
    <property type="match status" value="1"/>
</dbReference>
<dbReference type="Gene3D" id="2.40.30.10">
    <property type="entry name" value="Translation factors"/>
    <property type="match status" value="1"/>
</dbReference>
<dbReference type="HAMAP" id="MF_00144">
    <property type="entry name" value="tRNA_thiouridyl_MnmA"/>
    <property type="match status" value="1"/>
</dbReference>
<dbReference type="InterPro" id="IPR004506">
    <property type="entry name" value="MnmA-like"/>
</dbReference>
<dbReference type="InterPro" id="IPR046885">
    <property type="entry name" value="MnmA-like_C"/>
</dbReference>
<dbReference type="InterPro" id="IPR046884">
    <property type="entry name" value="MnmA-like_central"/>
</dbReference>
<dbReference type="InterPro" id="IPR023382">
    <property type="entry name" value="MnmA-like_central_sf"/>
</dbReference>
<dbReference type="InterPro" id="IPR014729">
    <property type="entry name" value="Rossmann-like_a/b/a_fold"/>
</dbReference>
<dbReference type="NCBIfam" id="NF001138">
    <property type="entry name" value="PRK00143.1"/>
    <property type="match status" value="1"/>
</dbReference>
<dbReference type="NCBIfam" id="TIGR00420">
    <property type="entry name" value="trmU"/>
    <property type="match status" value="1"/>
</dbReference>
<dbReference type="PANTHER" id="PTHR11933:SF5">
    <property type="entry name" value="MITOCHONDRIAL TRNA-SPECIFIC 2-THIOURIDYLASE 1"/>
    <property type="match status" value="1"/>
</dbReference>
<dbReference type="PANTHER" id="PTHR11933">
    <property type="entry name" value="TRNA 5-METHYLAMINOMETHYL-2-THIOURIDYLATE -METHYLTRANSFERASE"/>
    <property type="match status" value="1"/>
</dbReference>
<dbReference type="Pfam" id="PF03054">
    <property type="entry name" value="tRNA_Me_trans"/>
    <property type="match status" value="1"/>
</dbReference>
<dbReference type="Pfam" id="PF20258">
    <property type="entry name" value="tRNA_Me_trans_C"/>
    <property type="match status" value="1"/>
</dbReference>
<dbReference type="Pfam" id="PF20259">
    <property type="entry name" value="tRNA_Me_trans_M"/>
    <property type="match status" value="1"/>
</dbReference>
<dbReference type="SUPFAM" id="SSF52402">
    <property type="entry name" value="Adenine nucleotide alpha hydrolases-like"/>
    <property type="match status" value="1"/>
</dbReference>
<organism>
    <name type="scientific">Staphylococcus aureus (strain MRSA252)</name>
    <dbReference type="NCBI Taxonomy" id="282458"/>
    <lineage>
        <taxon>Bacteria</taxon>
        <taxon>Bacillati</taxon>
        <taxon>Bacillota</taxon>
        <taxon>Bacilli</taxon>
        <taxon>Bacillales</taxon>
        <taxon>Staphylococcaceae</taxon>
        <taxon>Staphylococcus</taxon>
    </lineage>
</organism>
<evidence type="ECO:0000255" key="1">
    <source>
        <dbReference type="HAMAP-Rule" id="MF_00144"/>
    </source>
</evidence>